<organism>
    <name type="scientific">Photobacterium profundum (strain SS9)</name>
    <dbReference type="NCBI Taxonomy" id="298386"/>
    <lineage>
        <taxon>Bacteria</taxon>
        <taxon>Pseudomonadati</taxon>
        <taxon>Pseudomonadota</taxon>
        <taxon>Gammaproteobacteria</taxon>
        <taxon>Vibrionales</taxon>
        <taxon>Vibrionaceae</taxon>
        <taxon>Photobacterium</taxon>
    </lineage>
</organism>
<protein>
    <recommendedName>
        <fullName evidence="1">Chaperone protein DnaK 1</fullName>
    </recommendedName>
    <alternativeName>
        <fullName evidence="1">HSP70 1</fullName>
    </alternativeName>
    <alternativeName>
        <fullName evidence="1">Heat shock 70 kDa protein 1</fullName>
    </alternativeName>
    <alternativeName>
        <fullName evidence="1">Heat shock protein 70 1</fullName>
    </alternativeName>
</protein>
<feature type="chain" id="PRO_0000225992" description="Chaperone protein DnaK 1">
    <location>
        <begin position="1"/>
        <end position="639"/>
    </location>
</feature>
<feature type="region of interest" description="Disordered" evidence="2">
    <location>
        <begin position="603"/>
        <end position="639"/>
    </location>
</feature>
<feature type="compositionally biased region" description="Low complexity" evidence="2">
    <location>
        <begin position="603"/>
        <end position="612"/>
    </location>
</feature>
<feature type="compositionally biased region" description="Acidic residues" evidence="2">
    <location>
        <begin position="625"/>
        <end position="639"/>
    </location>
</feature>
<feature type="modified residue" description="Phosphothreonine; by autocatalysis" evidence="1">
    <location>
        <position position="199"/>
    </location>
</feature>
<name>DNAK1_PHOPR</name>
<proteinExistence type="inferred from homology"/>
<dbReference type="EMBL" id="CR378665">
    <property type="protein sequence ID" value="CAG19118.1"/>
    <property type="molecule type" value="Genomic_DNA"/>
</dbReference>
<dbReference type="RefSeq" id="WP_011217464.1">
    <property type="nucleotide sequence ID" value="NC_006370.1"/>
</dbReference>
<dbReference type="SMR" id="Q6LUA7"/>
<dbReference type="STRING" id="298386.PBPRA0697"/>
<dbReference type="KEGG" id="ppr:PBPRA0697"/>
<dbReference type="eggNOG" id="COG0443">
    <property type="taxonomic scope" value="Bacteria"/>
</dbReference>
<dbReference type="HOGENOM" id="CLU_005965_2_1_6"/>
<dbReference type="Proteomes" id="UP000000593">
    <property type="component" value="Chromosome 1"/>
</dbReference>
<dbReference type="GO" id="GO:0005524">
    <property type="term" value="F:ATP binding"/>
    <property type="evidence" value="ECO:0007669"/>
    <property type="project" value="UniProtKB-UniRule"/>
</dbReference>
<dbReference type="GO" id="GO:0140662">
    <property type="term" value="F:ATP-dependent protein folding chaperone"/>
    <property type="evidence" value="ECO:0007669"/>
    <property type="project" value="InterPro"/>
</dbReference>
<dbReference type="GO" id="GO:0051082">
    <property type="term" value="F:unfolded protein binding"/>
    <property type="evidence" value="ECO:0007669"/>
    <property type="project" value="InterPro"/>
</dbReference>
<dbReference type="CDD" id="cd10234">
    <property type="entry name" value="ASKHA_NBD_HSP70_DnaK-like"/>
    <property type="match status" value="1"/>
</dbReference>
<dbReference type="FunFam" id="2.60.34.10:FF:000014">
    <property type="entry name" value="Chaperone protein DnaK HSP70"/>
    <property type="match status" value="1"/>
</dbReference>
<dbReference type="FunFam" id="3.30.30.30:FF:000003">
    <property type="entry name" value="Heat shock protein 9"/>
    <property type="match status" value="1"/>
</dbReference>
<dbReference type="FunFam" id="1.20.1270.10:FF:000001">
    <property type="entry name" value="Molecular chaperone DnaK"/>
    <property type="match status" value="1"/>
</dbReference>
<dbReference type="FunFam" id="3.30.420.40:FF:000004">
    <property type="entry name" value="Molecular chaperone DnaK"/>
    <property type="match status" value="1"/>
</dbReference>
<dbReference type="FunFam" id="3.90.640.10:FF:000003">
    <property type="entry name" value="Molecular chaperone DnaK"/>
    <property type="match status" value="1"/>
</dbReference>
<dbReference type="Gene3D" id="1.20.1270.10">
    <property type="match status" value="1"/>
</dbReference>
<dbReference type="Gene3D" id="3.30.420.40">
    <property type="match status" value="2"/>
</dbReference>
<dbReference type="Gene3D" id="3.90.640.10">
    <property type="entry name" value="Actin, Chain A, domain 4"/>
    <property type="match status" value="1"/>
</dbReference>
<dbReference type="Gene3D" id="2.60.34.10">
    <property type="entry name" value="Substrate Binding Domain Of DNAk, Chain A, domain 1"/>
    <property type="match status" value="1"/>
</dbReference>
<dbReference type="HAMAP" id="MF_00332">
    <property type="entry name" value="DnaK"/>
    <property type="match status" value="1"/>
</dbReference>
<dbReference type="InterPro" id="IPR043129">
    <property type="entry name" value="ATPase_NBD"/>
</dbReference>
<dbReference type="InterPro" id="IPR012725">
    <property type="entry name" value="Chaperone_DnaK"/>
</dbReference>
<dbReference type="InterPro" id="IPR018181">
    <property type="entry name" value="Heat_shock_70_CS"/>
</dbReference>
<dbReference type="InterPro" id="IPR029048">
    <property type="entry name" value="HSP70_C_sf"/>
</dbReference>
<dbReference type="InterPro" id="IPR029047">
    <property type="entry name" value="HSP70_peptide-bd_sf"/>
</dbReference>
<dbReference type="InterPro" id="IPR013126">
    <property type="entry name" value="Hsp_70_fam"/>
</dbReference>
<dbReference type="NCBIfam" id="NF001413">
    <property type="entry name" value="PRK00290.1"/>
    <property type="match status" value="1"/>
</dbReference>
<dbReference type="NCBIfam" id="NF003520">
    <property type="entry name" value="PRK05183.1"/>
    <property type="match status" value="1"/>
</dbReference>
<dbReference type="NCBIfam" id="TIGR02350">
    <property type="entry name" value="prok_dnaK"/>
    <property type="match status" value="1"/>
</dbReference>
<dbReference type="PANTHER" id="PTHR19375">
    <property type="entry name" value="HEAT SHOCK PROTEIN 70KDA"/>
    <property type="match status" value="1"/>
</dbReference>
<dbReference type="Pfam" id="PF00012">
    <property type="entry name" value="HSP70"/>
    <property type="match status" value="1"/>
</dbReference>
<dbReference type="PRINTS" id="PR00301">
    <property type="entry name" value="HEATSHOCK70"/>
</dbReference>
<dbReference type="SUPFAM" id="SSF53067">
    <property type="entry name" value="Actin-like ATPase domain"/>
    <property type="match status" value="2"/>
</dbReference>
<dbReference type="SUPFAM" id="SSF100934">
    <property type="entry name" value="Heat shock protein 70kD (HSP70), C-terminal subdomain"/>
    <property type="match status" value="1"/>
</dbReference>
<dbReference type="SUPFAM" id="SSF100920">
    <property type="entry name" value="Heat shock protein 70kD (HSP70), peptide-binding domain"/>
    <property type="match status" value="1"/>
</dbReference>
<dbReference type="PROSITE" id="PS00297">
    <property type="entry name" value="HSP70_1"/>
    <property type="match status" value="1"/>
</dbReference>
<dbReference type="PROSITE" id="PS00329">
    <property type="entry name" value="HSP70_2"/>
    <property type="match status" value="1"/>
</dbReference>
<dbReference type="PROSITE" id="PS01036">
    <property type="entry name" value="HSP70_3"/>
    <property type="match status" value="1"/>
</dbReference>
<evidence type="ECO:0000255" key="1">
    <source>
        <dbReference type="HAMAP-Rule" id="MF_00332"/>
    </source>
</evidence>
<evidence type="ECO:0000256" key="2">
    <source>
        <dbReference type="SAM" id="MobiDB-lite"/>
    </source>
</evidence>
<gene>
    <name evidence="1" type="primary">dnaK1</name>
    <name type="ordered locus">PBPRA0697</name>
</gene>
<sequence length="639" mass="69359">MGRIIGIDLGTTNSCVAVLDGDKPRVIENAEGERTTASVVAYTQDGETLVGQPAKRQAVTNPENTLYAIKRLIGRRFEDEEVQRDLKIMPFKIVKADNGDAWVEAKGQKMAAPQVSAEILKKMKKTAEDFLGEEVTAAVITVPAYFNDAQRQATKDAGRIAGLEVKRIINEPTAAALAYGLDKKGGDRTIAVYDLGGGTFDISIIEIDEVEGEKTFEVLSTNGDTHLGGEDFDNRLINYLVEEFKKEQGMDLRNDPLAMQRLKEAAEKAKIELSSAQQTDVNLPYITADATGPKHMNIKVTRAKLESLVEDLVQRSLEPLKVALSDAGLSVSEITDIIVVGGQTRMPMVQAKVAEFFGKEPRKDVNPDEAVAVGAAVQAGVLAGDVKDVLLLDVTPLSLGIETMGGVMTKLIEKNTTIPTKANQVFSTAEDNQSAVTIHVLQGERKQSSYNKSLGQFNLEGIQAAARGMPQIEVTFDLDADGILHVSAKDKSTGKEQKITIQSSSGLSEEDIEKMVQEAEANKESDKKFEELVTARNQADQLIHGTRKQVEEAGEALPAEDKEKIEAAVSELEEARKAEDKEAIDAKVQALVAASQKLMEIAQQQAQAQQAPGGEGEQEAKQDDNVVDAEFEEVKDEKK</sequence>
<comment type="function">
    <text evidence="1">Acts as a chaperone.</text>
</comment>
<comment type="induction">
    <text evidence="1">By stress conditions e.g. heat shock.</text>
</comment>
<comment type="similarity">
    <text evidence="1">Belongs to the heat shock protein 70 family.</text>
</comment>
<reference key="1">
    <citation type="journal article" date="2005" name="Science">
        <title>Life at depth: Photobacterium profundum genome sequence and expression analysis.</title>
        <authorList>
            <person name="Vezzi A."/>
            <person name="Campanaro S."/>
            <person name="D'Angelo M."/>
            <person name="Simonato F."/>
            <person name="Vitulo N."/>
            <person name="Lauro F.M."/>
            <person name="Cestaro A."/>
            <person name="Malacrida G."/>
            <person name="Simionati B."/>
            <person name="Cannata N."/>
            <person name="Romualdi C."/>
            <person name="Bartlett D.H."/>
            <person name="Valle G."/>
        </authorList>
    </citation>
    <scope>NUCLEOTIDE SEQUENCE [LARGE SCALE GENOMIC DNA]</scope>
    <source>
        <strain>ATCC BAA-1253 / SS9</strain>
    </source>
</reference>
<accession>Q6LUA7</accession>
<keyword id="KW-0067">ATP-binding</keyword>
<keyword id="KW-0143">Chaperone</keyword>
<keyword id="KW-0547">Nucleotide-binding</keyword>
<keyword id="KW-0597">Phosphoprotein</keyword>
<keyword id="KW-1185">Reference proteome</keyword>
<keyword id="KW-0346">Stress response</keyword>